<evidence type="ECO:0000250" key="1">
    <source>
        <dbReference type="UniProtKB" id="P84642"/>
    </source>
</evidence>
<evidence type="ECO:0000255" key="2">
    <source>
        <dbReference type="PROSITE-ProRule" id="PRU00395"/>
    </source>
</evidence>
<evidence type="ECO:0000269" key="3">
    <source>
    </source>
</evidence>
<evidence type="ECO:0000303" key="4">
    <source>
    </source>
</evidence>
<evidence type="ECO:0000305" key="5"/>
<sequence>KIPCGESCVYIPCISSVLGCSCSNKVCYKD</sequence>
<feature type="peptide" id="PRO_0000450764" description="Cyclotide hyen-H" evidence="2">
    <location>
        <begin position="1"/>
        <end position="30"/>
    </location>
</feature>
<feature type="disulfide bond" evidence="2 3">
    <location>
        <begin position="4"/>
        <end position="20"/>
    </location>
</feature>
<feature type="disulfide bond" evidence="2 3">
    <location>
        <begin position="8"/>
        <end position="22"/>
    </location>
</feature>
<feature type="disulfide bond" evidence="2 3">
    <location>
        <begin position="13"/>
        <end position="27"/>
    </location>
</feature>
<feature type="cross-link" description="Cyclopeptide (Lys-Asp)" evidence="1">
    <location>
        <begin position="1"/>
        <end position="30"/>
    </location>
</feature>
<keyword id="KW-0903">Direct protein sequencing</keyword>
<keyword id="KW-1015">Disulfide bond</keyword>
<keyword id="KW-0960">Knottin</keyword>
<keyword id="KW-0611">Plant defense</keyword>
<comment type="function">
    <text evidence="2">Probably participates in a plant defense mechanism.</text>
</comment>
<comment type="tissue specificity">
    <text evidence="3">Detected in stems (at protein level).</text>
</comment>
<comment type="domain">
    <text evidence="5">The presence of a 'disulfide through disulfide knot' structurally defines this protein as a knottin.</text>
</comment>
<comment type="PTM">
    <text evidence="2">This is a cyclic peptide.</text>
</comment>
<comment type="mass spectrometry"/>
<comment type="similarity">
    <text evidence="2">Belongs to the cyclotide family. Bracelet subfamily.</text>
</comment>
<comment type="caution">
    <text evidence="2">This peptide is cyclic. The start position was chosen by similarity to Oak1 (kalata B1) for which the DNA sequence is known.</text>
</comment>
<reference evidence="5" key="1">
    <citation type="journal article" date="2020" name="J. Biol. Chem.">
        <title>Discovery and mechanistic studies of cytotoxic cyclotides from the medicinal herb Hybanthus enneaspermus.</title>
        <authorList>
            <person name="Du Q."/>
            <person name="Chan L.Y."/>
            <person name="Gilding E.K."/>
            <person name="Henriques S.T."/>
            <person name="Condon N.D."/>
            <person name="Ravipati A.S."/>
            <person name="Kaas Q."/>
            <person name="Huang Y.H."/>
            <person name="Craik D.J."/>
        </authorList>
    </citation>
    <scope>PROTEIN SEQUENCE</scope>
    <scope>MASS SPECTROMETRY</scope>
    <scope>TISSUE SPECIFICITY</scope>
    <scope>DISULFIDE BONDS</scope>
</reference>
<proteinExistence type="evidence at protein level"/>
<dbReference type="SMR" id="C0HLP2"/>
<dbReference type="GO" id="GO:0051715">
    <property type="term" value="P:cytolysis in another organism"/>
    <property type="evidence" value="ECO:0000314"/>
    <property type="project" value="UniProtKB"/>
</dbReference>
<dbReference type="GO" id="GO:0006952">
    <property type="term" value="P:defense response"/>
    <property type="evidence" value="ECO:0000314"/>
    <property type="project" value="UniProtKB"/>
</dbReference>
<dbReference type="InterPro" id="IPR005535">
    <property type="entry name" value="Cyclotide"/>
</dbReference>
<dbReference type="InterPro" id="IPR012323">
    <property type="entry name" value="Cyclotide_bracelet_CS"/>
</dbReference>
<dbReference type="InterPro" id="IPR036146">
    <property type="entry name" value="Cyclotide_sf"/>
</dbReference>
<dbReference type="Pfam" id="PF03784">
    <property type="entry name" value="Cyclotide"/>
    <property type="match status" value="1"/>
</dbReference>
<dbReference type="PIRSF" id="PIRSF037891">
    <property type="entry name" value="Cycloviolacin"/>
    <property type="match status" value="1"/>
</dbReference>
<dbReference type="SUPFAM" id="SSF57038">
    <property type="entry name" value="Cyclotides"/>
    <property type="match status" value="1"/>
</dbReference>
<dbReference type="PROSITE" id="PS51052">
    <property type="entry name" value="CYCLOTIDE"/>
    <property type="match status" value="1"/>
</dbReference>
<dbReference type="PROSITE" id="PS60008">
    <property type="entry name" value="CYCLOTIDE_BRACELET"/>
    <property type="match status" value="1"/>
</dbReference>
<protein>
    <recommendedName>
        <fullName evidence="4">Cyclotide hyen-H</fullName>
    </recommendedName>
</protein>
<accession>C0HLP2</accession>
<name>CYHEH_PIGEN</name>
<organism evidence="4">
    <name type="scientific">Pigea enneasperma</name>
    <name type="common">Spade flower</name>
    <name type="synonym">Afrohybanthus enneaspermus</name>
    <dbReference type="NCBI Taxonomy" id="212266"/>
    <lineage>
        <taxon>Eukaryota</taxon>
        <taxon>Viridiplantae</taxon>
        <taxon>Streptophyta</taxon>
        <taxon>Embryophyta</taxon>
        <taxon>Tracheophyta</taxon>
        <taxon>Spermatophyta</taxon>
        <taxon>Magnoliopsida</taxon>
        <taxon>eudicotyledons</taxon>
        <taxon>Gunneridae</taxon>
        <taxon>Pentapetalae</taxon>
        <taxon>rosids</taxon>
        <taxon>fabids</taxon>
        <taxon>Malpighiales</taxon>
        <taxon>Violaceae</taxon>
        <taxon>Pigea</taxon>
    </lineage>
</organism>